<evidence type="ECO:0000255" key="1">
    <source>
        <dbReference type="HAMAP-Rule" id="MF_00323"/>
    </source>
</evidence>
<dbReference type="EC" id="4.98.1.1" evidence="1"/>
<dbReference type="EMBL" id="AM884177">
    <property type="protein sequence ID" value="CAP07138.1"/>
    <property type="molecule type" value="Genomic_DNA"/>
</dbReference>
<dbReference type="RefSeq" id="WP_009873848.1">
    <property type="nucleotide sequence ID" value="NC_010280.2"/>
</dbReference>
<dbReference type="SMR" id="B0BCC3"/>
<dbReference type="KEGG" id="ctl:CTLon_0741"/>
<dbReference type="HOGENOM" id="CLU_018884_1_0_0"/>
<dbReference type="UniPathway" id="UPA00252">
    <property type="reaction ID" value="UER00325"/>
</dbReference>
<dbReference type="Proteomes" id="UP001154401">
    <property type="component" value="Chromosome"/>
</dbReference>
<dbReference type="GO" id="GO:0005737">
    <property type="term" value="C:cytoplasm"/>
    <property type="evidence" value="ECO:0007669"/>
    <property type="project" value="UniProtKB-SubCell"/>
</dbReference>
<dbReference type="GO" id="GO:0004325">
    <property type="term" value="F:ferrochelatase activity"/>
    <property type="evidence" value="ECO:0007669"/>
    <property type="project" value="UniProtKB-UniRule"/>
</dbReference>
<dbReference type="GO" id="GO:0046872">
    <property type="term" value="F:metal ion binding"/>
    <property type="evidence" value="ECO:0007669"/>
    <property type="project" value="UniProtKB-KW"/>
</dbReference>
<dbReference type="GO" id="GO:0006783">
    <property type="term" value="P:heme biosynthetic process"/>
    <property type="evidence" value="ECO:0007669"/>
    <property type="project" value="UniProtKB-UniRule"/>
</dbReference>
<dbReference type="CDD" id="cd00419">
    <property type="entry name" value="Ferrochelatase_C"/>
    <property type="match status" value="1"/>
</dbReference>
<dbReference type="CDD" id="cd03411">
    <property type="entry name" value="Ferrochelatase_N"/>
    <property type="match status" value="1"/>
</dbReference>
<dbReference type="Gene3D" id="3.40.50.1400">
    <property type="match status" value="2"/>
</dbReference>
<dbReference type="HAMAP" id="MF_00323">
    <property type="entry name" value="Ferrochelatase"/>
    <property type="match status" value="1"/>
</dbReference>
<dbReference type="InterPro" id="IPR001015">
    <property type="entry name" value="Ferrochelatase"/>
</dbReference>
<dbReference type="InterPro" id="IPR019772">
    <property type="entry name" value="Ferrochelatase_AS"/>
</dbReference>
<dbReference type="InterPro" id="IPR033644">
    <property type="entry name" value="Ferrochelatase_C"/>
</dbReference>
<dbReference type="InterPro" id="IPR033659">
    <property type="entry name" value="Ferrochelatase_N"/>
</dbReference>
<dbReference type="NCBIfam" id="TIGR00109">
    <property type="entry name" value="hemH"/>
    <property type="match status" value="1"/>
</dbReference>
<dbReference type="PANTHER" id="PTHR11108">
    <property type="entry name" value="FERROCHELATASE"/>
    <property type="match status" value="1"/>
</dbReference>
<dbReference type="PANTHER" id="PTHR11108:SF1">
    <property type="entry name" value="FERROCHELATASE, MITOCHONDRIAL"/>
    <property type="match status" value="1"/>
</dbReference>
<dbReference type="Pfam" id="PF00762">
    <property type="entry name" value="Ferrochelatase"/>
    <property type="match status" value="1"/>
</dbReference>
<dbReference type="SUPFAM" id="SSF53800">
    <property type="entry name" value="Chelatase"/>
    <property type="match status" value="1"/>
</dbReference>
<dbReference type="PROSITE" id="PS00534">
    <property type="entry name" value="FERROCHELATASE"/>
    <property type="match status" value="1"/>
</dbReference>
<protein>
    <recommendedName>
        <fullName evidence="1">Ferrochelatase</fullName>
        <ecNumber evidence="1">4.98.1.1</ecNumber>
    </recommendedName>
    <alternativeName>
        <fullName evidence="1">Heme synthase</fullName>
    </alternativeName>
    <alternativeName>
        <fullName evidence="1">Protoheme ferro-lyase</fullName>
    </alternativeName>
</protein>
<gene>
    <name evidence="1" type="primary">hemH</name>
    <name type="ordered locus">CTLon_0741</name>
</gene>
<accession>B0BCC3</accession>
<reference key="1">
    <citation type="journal article" date="2008" name="Genome Res.">
        <title>Chlamydia trachomatis: genome sequence analysis of lymphogranuloma venereum isolates.</title>
        <authorList>
            <person name="Thomson N.R."/>
            <person name="Holden M.T.G."/>
            <person name="Carder C."/>
            <person name="Lennard N."/>
            <person name="Lockey S.J."/>
            <person name="Marsh P."/>
            <person name="Skipp P."/>
            <person name="O'Connor C.D."/>
            <person name="Goodhead I."/>
            <person name="Norbertzcak H."/>
            <person name="Harris B."/>
            <person name="Ormond D."/>
            <person name="Rance R."/>
            <person name="Quail M.A."/>
            <person name="Parkhill J."/>
            <person name="Stephens R.S."/>
            <person name="Clarke I.N."/>
        </authorList>
    </citation>
    <scope>NUCLEOTIDE SEQUENCE [LARGE SCALE GENOMIC DNA]</scope>
    <source>
        <strain>UCH-1/proctitis</strain>
    </source>
</reference>
<name>HEMH_CHLTB</name>
<proteinExistence type="inferred from homology"/>
<feature type="chain" id="PRO_1000116037" description="Ferrochelatase">
    <location>
        <begin position="1"/>
        <end position="314"/>
    </location>
</feature>
<feature type="binding site" evidence="1">
    <location>
        <position position="184"/>
    </location>
    <ligand>
        <name>Fe cation</name>
        <dbReference type="ChEBI" id="CHEBI:24875"/>
    </ligand>
</feature>
<feature type="binding site" evidence="1">
    <location>
        <position position="259"/>
    </location>
    <ligand>
        <name>Fe cation</name>
        <dbReference type="ChEBI" id="CHEBI:24875"/>
    </ligand>
</feature>
<keyword id="KW-0963">Cytoplasm</keyword>
<keyword id="KW-0350">Heme biosynthesis</keyword>
<keyword id="KW-0408">Iron</keyword>
<keyword id="KW-0456">Lyase</keyword>
<keyword id="KW-0479">Metal-binding</keyword>
<keyword id="KW-0627">Porphyrin biosynthesis</keyword>
<sequence length="314" mass="35608">MVTYLLANFGGPRTSQEIVSFLQALLTDRDVTGGMIPSVLHRPLFSYIAKRRAPHVARQYAYLGGGSPIFQDTERLAQNLSQELQASVIPFHRYLPETHRETLQALQESQGSIVGIPLFPHYTFAVTGSIIRFFLQHLPEKPISWITQFGVHPQFVSCMQQHIRDCLAAQQIAVEDCYFLFSVHGLPQRHIRLGDPYAQQCQASFEALRGELEGEIAFQSKFGIGKWLDPSTQEVCQSLRTKKRYIVIVPFGFVSDHIETLYEIDHLYVPILLQKEYRVVRIPAINASSRWVSSLAAIVRSSPQETSLEPLLMP</sequence>
<comment type="function">
    <text evidence="1">Catalyzes the ferrous insertion into protoporphyrin IX.</text>
</comment>
<comment type="catalytic activity">
    <reaction evidence="1">
        <text>heme b + 2 H(+) = protoporphyrin IX + Fe(2+)</text>
        <dbReference type="Rhea" id="RHEA:22584"/>
        <dbReference type="ChEBI" id="CHEBI:15378"/>
        <dbReference type="ChEBI" id="CHEBI:29033"/>
        <dbReference type="ChEBI" id="CHEBI:57306"/>
        <dbReference type="ChEBI" id="CHEBI:60344"/>
        <dbReference type="EC" id="4.98.1.1"/>
    </reaction>
</comment>
<comment type="pathway">
    <text evidence="1">Porphyrin-containing compound metabolism; protoheme biosynthesis; protoheme from protoporphyrin-IX: step 1/1.</text>
</comment>
<comment type="subcellular location">
    <subcellularLocation>
        <location evidence="1">Cytoplasm</location>
    </subcellularLocation>
</comment>
<comment type="similarity">
    <text evidence="1">Belongs to the ferrochelatase family.</text>
</comment>
<organism>
    <name type="scientific">Chlamydia trachomatis serovar L2b (strain UCH-1/proctitis)</name>
    <dbReference type="NCBI Taxonomy" id="471473"/>
    <lineage>
        <taxon>Bacteria</taxon>
        <taxon>Pseudomonadati</taxon>
        <taxon>Chlamydiota</taxon>
        <taxon>Chlamydiia</taxon>
        <taxon>Chlamydiales</taxon>
        <taxon>Chlamydiaceae</taxon>
        <taxon>Chlamydia/Chlamydophila group</taxon>
        <taxon>Chlamydia</taxon>
    </lineage>
</organism>